<dbReference type="EC" id="2.1.3.2" evidence="1"/>
<dbReference type="EMBL" id="AE017262">
    <property type="protein sequence ID" value="AAT04636.1"/>
    <property type="molecule type" value="Genomic_DNA"/>
</dbReference>
<dbReference type="RefSeq" id="WP_003725670.1">
    <property type="nucleotide sequence ID" value="NC_002973.6"/>
</dbReference>
<dbReference type="SMR" id="Q71YH8"/>
<dbReference type="KEGG" id="lmf:LMOf2365_1866"/>
<dbReference type="HOGENOM" id="CLU_043846_2_1_9"/>
<dbReference type="UniPathway" id="UPA00070">
    <property type="reaction ID" value="UER00116"/>
</dbReference>
<dbReference type="GO" id="GO:0005829">
    <property type="term" value="C:cytosol"/>
    <property type="evidence" value="ECO:0007669"/>
    <property type="project" value="TreeGrafter"/>
</dbReference>
<dbReference type="GO" id="GO:0016597">
    <property type="term" value="F:amino acid binding"/>
    <property type="evidence" value="ECO:0007669"/>
    <property type="project" value="InterPro"/>
</dbReference>
<dbReference type="GO" id="GO:0004070">
    <property type="term" value="F:aspartate carbamoyltransferase activity"/>
    <property type="evidence" value="ECO:0007669"/>
    <property type="project" value="UniProtKB-UniRule"/>
</dbReference>
<dbReference type="GO" id="GO:0006207">
    <property type="term" value="P:'de novo' pyrimidine nucleobase biosynthetic process"/>
    <property type="evidence" value="ECO:0007669"/>
    <property type="project" value="InterPro"/>
</dbReference>
<dbReference type="GO" id="GO:0044205">
    <property type="term" value="P:'de novo' UMP biosynthetic process"/>
    <property type="evidence" value="ECO:0007669"/>
    <property type="project" value="UniProtKB-UniRule"/>
</dbReference>
<dbReference type="GO" id="GO:0006520">
    <property type="term" value="P:amino acid metabolic process"/>
    <property type="evidence" value="ECO:0007669"/>
    <property type="project" value="InterPro"/>
</dbReference>
<dbReference type="FunFam" id="3.40.50.1370:FF:000011">
    <property type="entry name" value="Aspartate carbamoyltransferase"/>
    <property type="match status" value="1"/>
</dbReference>
<dbReference type="Gene3D" id="3.40.50.1370">
    <property type="entry name" value="Aspartate/ornithine carbamoyltransferase"/>
    <property type="match status" value="2"/>
</dbReference>
<dbReference type="HAMAP" id="MF_00001">
    <property type="entry name" value="Asp_carb_tr"/>
    <property type="match status" value="1"/>
</dbReference>
<dbReference type="InterPro" id="IPR006132">
    <property type="entry name" value="Asp/Orn_carbamoyltranf_P-bd"/>
</dbReference>
<dbReference type="InterPro" id="IPR006130">
    <property type="entry name" value="Asp/Orn_carbamoylTrfase"/>
</dbReference>
<dbReference type="InterPro" id="IPR036901">
    <property type="entry name" value="Asp/Orn_carbamoylTrfase_sf"/>
</dbReference>
<dbReference type="InterPro" id="IPR002082">
    <property type="entry name" value="Asp_carbamoyltransf"/>
</dbReference>
<dbReference type="InterPro" id="IPR006131">
    <property type="entry name" value="Asp_carbamoyltransf_Asp/Orn-bd"/>
</dbReference>
<dbReference type="NCBIfam" id="TIGR00670">
    <property type="entry name" value="asp_carb_tr"/>
    <property type="match status" value="1"/>
</dbReference>
<dbReference type="NCBIfam" id="NF002032">
    <property type="entry name" value="PRK00856.1"/>
    <property type="match status" value="1"/>
</dbReference>
<dbReference type="PANTHER" id="PTHR45753:SF6">
    <property type="entry name" value="ASPARTATE CARBAMOYLTRANSFERASE"/>
    <property type="match status" value="1"/>
</dbReference>
<dbReference type="PANTHER" id="PTHR45753">
    <property type="entry name" value="ORNITHINE CARBAMOYLTRANSFERASE, MITOCHONDRIAL"/>
    <property type="match status" value="1"/>
</dbReference>
<dbReference type="Pfam" id="PF00185">
    <property type="entry name" value="OTCace"/>
    <property type="match status" value="1"/>
</dbReference>
<dbReference type="Pfam" id="PF02729">
    <property type="entry name" value="OTCace_N"/>
    <property type="match status" value="1"/>
</dbReference>
<dbReference type="PRINTS" id="PR00100">
    <property type="entry name" value="AOTCASE"/>
</dbReference>
<dbReference type="PRINTS" id="PR00101">
    <property type="entry name" value="ATCASE"/>
</dbReference>
<dbReference type="SUPFAM" id="SSF53671">
    <property type="entry name" value="Aspartate/ornithine carbamoyltransferase"/>
    <property type="match status" value="1"/>
</dbReference>
<dbReference type="PROSITE" id="PS00097">
    <property type="entry name" value="CARBAMOYLTRANSFERASE"/>
    <property type="match status" value="1"/>
</dbReference>
<accession>Q71YH8</accession>
<proteinExistence type="inferred from homology"/>
<name>PYRB_LISMF</name>
<evidence type="ECO:0000255" key="1">
    <source>
        <dbReference type="HAMAP-Rule" id="MF_00001"/>
    </source>
</evidence>
<gene>
    <name evidence="1" type="primary">pyrB</name>
    <name type="ordered locus">LMOf2365_1866</name>
</gene>
<feature type="chain" id="PRO_0000113156" description="Aspartate carbamoyltransferase catalytic subunit">
    <location>
        <begin position="1"/>
        <end position="303"/>
    </location>
</feature>
<feature type="binding site" evidence="1">
    <location>
        <position position="49"/>
    </location>
    <ligand>
        <name>carbamoyl phosphate</name>
        <dbReference type="ChEBI" id="CHEBI:58228"/>
    </ligand>
</feature>
<feature type="binding site" evidence="1">
    <location>
        <position position="50"/>
    </location>
    <ligand>
        <name>carbamoyl phosphate</name>
        <dbReference type="ChEBI" id="CHEBI:58228"/>
    </ligand>
</feature>
<feature type="binding site" evidence="1">
    <location>
        <position position="77"/>
    </location>
    <ligand>
        <name>L-aspartate</name>
        <dbReference type="ChEBI" id="CHEBI:29991"/>
    </ligand>
</feature>
<feature type="binding site" evidence="1">
    <location>
        <position position="99"/>
    </location>
    <ligand>
        <name>carbamoyl phosphate</name>
        <dbReference type="ChEBI" id="CHEBI:58228"/>
    </ligand>
</feature>
<feature type="binding site" evidence="1">
    <location>
        <position position="126"/>
    </location>
    <ligand>
        <name>carbamoyl phosphate</name>
        <dbReference type="ChEBI" id="CHEBI:58228"/>
    </ligand>
</feature>
<feature type="binding site" evidence="1">
    <location>
        <position position="129"/>
    </location>
    <ligand>
        <name>carbamoyl phosphate</name>
        <dbReference type="ChEBI" id="CHEBI:58228"/>
    </ligand>
</feature>
<feature type="binding site" evidence="1">
    <location>
        <position position="159"/>
    </location>
    <ligand>
        <name>L-aspartate</name>
        <dbReference type="ChEBI" id="CHEBI:29991"/>
    </ligand>
</feature>
<feature type="binding site" evidence="1">
    <location>
        <position position="211"/>
    </location>
    <ligand>
        <name>L-aspartate</name>
        <dbReference type="ChEBI" id="CHEBI:29991"/>
    </ligand>
</feature>
<feature type="binding site" evidence="1">
    <location>
        <position position="252"/>
    </location>
    <ligand>
        <name>carbamoyl phosphate</name>
        <dbReference type="ChEBI" id="CHEBI:58228"/>
    </ligand>
</feature>
<feature type="binding site" evidence="1">
    <location>
        <position position="253"/>
    </location>
    <ligand>
        <name>carbamoyl phosphate</name>
        <dbReference type="ChEBI" id="CHEBI:58228"/>
    </ligand>
</feature>
<comment type="function">
    <text evidence="1">Catalyzes the condensation of carbamoyl phosphate and aspartate to form carbamoyl aspartate and inorganic phosphate, the committed step in the de novo pyrimidine nucleotide biosynthesis pathway.</text>
</comment>
<comment type="catalytic activity">
    <reaction evidence="1">
        <text>carbamoyl phosphate + L-aspartate = N-carbamoyl-L-aspartate + phosphate + H(+)</text>
        <dbReference type="Rhea" id="RHEA:20013"/>
        <dbReference type="ChEBI" id="CHEBI:15378"/>
        <dbReference type="ChEBI" id="CHEBI:29991"/>
        <dbReference type="ChEBI" id="CHEBI:32814"/>
        <dbReference type="ChEBI" id="CHEBI:43474"/>
        <dbReference type="ChEBI" id="CHEBI:58228"/>
        <dbReference type="EC" id="2.1.3.2"/>
    </reaction>
</comment>
<comment type="pathway">
    <text evidence="1">Pyrimidine metabolism; UMP biosynthesis via de novo pathway; (S)-dihydroorotate from bicarbonate: step 2/3.</text>
</comment>
<comment type="subunit">
    <text evidence="1">Heterododecamer (2C3:3R2) of six catalytic PyrB chains organized as two trimers (C3), and six regulatory PyrI chains organized as three dimers (R2).</text>
</comment>
<comment type="similarity">
    <text evidence="1">Belongs to the aspartate/ornithine carbamoyltransferase superfamily. ATCase family.</text>
</comment>
<organism>
    <name type="scientific">Listeria monocytogenes serotype 4b (strain F2365)</name>
    <dbReference type="NCBI Taxonomy" id="265669"/>
    <lineage>
        <taxon>Bacteria</taxon>
        <taxon>Bacillati</taxon>
        <taxon>Bacillota</taxon>
        <taxon>Bacilli</taxon>
        <taxon>Bacillales</taxon>
        <taxon>Listeriaceae</taxon>
        <taxon>Listeria</taxon>
    </lineage>
</organism>
<sequence>MKNLLSMEALTVHEIEHLLEQAAQFKRGKKATFNEQTFAVNMFFEPSTRTHTSFEVAEKKLGVEVVSFDAASSSMTKGETLYDTLLTMQAVGVNVAVIRHSEENYYAGLEKLDIAIVNGGDGCGEHPSQSLLDLFTIKEQFGTFQGLKVAIAGDIRHSRVANSNMKVLKRLGAELFFSGPREWFDESYLAYGTYLSVDEIVEKVDVLMLLRVQHERHSGTDEFTKESYHEKFGLTENRAKQLKEDAIIMHPSPVNRDVEIADSLVESEKSRIVTQMTNGVFIRMAILEAILKEQEMRAKLCTY</sequence>
<reference key="1">
    <citation type="journal article" date="2004" name="Nucleic Acids Res.">
        <title>Whole genome comparisons of serotype 4b and 1/2a strains of the food-borne pathogen Listeria monocytogenes reveal new insights into the core genome components of this species.</title>
        <authorList>
            <person name="Nelson K.E."/>
            <person name="Fouts D.E."/>
            <person name="Mongodin E.F."/>
            <person name="Ravel J."/>
            <person name="DeBoy R.T."/>
            <person name="Kolonay J.F."/>
            <person name="Rasko D.A."/>
            <person name="Angiuoli S.V."/>
            <person name="Gill S.R."/>
            <person name="Paulsen I.T."/>
            <person name="Peterson J.D."/>
            <person name="White O."/>
            <person name="Nelson W.C."/>
            <person name="Nierman W.C."/>
            <person name="Beanan M.J."/>
            <person name="Brinkac L.M."/>
            <person name="Daugherty S.C."/>
            <person name="Dodson R.J."/>
            <person name="Durkin A.S."/>
            <person name="Madupu R."/>
            <person name="Haft D.H."/>
            <person name="Selengut J."/>
            <person name="Van Aken S.E."/>
            <person name="Khouri H.M."/>
            <person name="Fedorova N."/>
            <person name="Forberger H.A."/>
            <person name="Tran B."/>
            <person name="Kathariou S."/>
            <person name="Wonderling L.D."/>
            <person name="Uhlich G.A."/>
            <person name="Bayles D.O."/>
            <person name="Luchansky J.B."/>
            <person name="Fraser C.M."/>
        </authorList>
    </citation>
    <scope>NUCLEOTIDE SEQUENCE [LARGE SCALE GENOMIC DNA]</scope>
    <source>
        <strain>F2365</strain>
    </source>
</reference>
<protein>
    <recommendedName>
        <fullName evidence="1">Aspartate carbamoyltransferase catalytic subunit</fullName>
        <ecNumber evidence="1">2.1.3.2</ecNumber>
    </recommendedName>
    <alternativeName>
        <fullName evidence="1">Aspartate transcarbamylase</fullName>
        <shortName evidence="1">ATCase</shortName>
    </alternativeName>
</protein>
<keyword id="KW-0665">Pyrimidine biosynthesis</keyword>
<keyword id="KW-0808">Transferase</keyword>